<feature type="initiator methionine" description="Removed">
    <location>
        <position position="1"/>
    </location>
</feature>
<feature type="chain" id="PRO_0000203741" description="Guanine nucleotide-binding protein G(t) subunit alpha-2">
    <location>
        <begin position="2"/>
        <end position="354"/>
    </location>
</feature>
<feature type="domain" description="G-alpha" evidence="2">
    <location>
        <begin position="32"/>
        <end position="354"/>
    </location>
</feature>
<feature type="region of interest" description="Disordered" evidence="3">
    <location>
        <begin position="1"/>
        <end position="28"/>
    </location>
</feature>
<feature type="region of interest" description="G1 motif" evidence="2">
    <location>
        <begin position="35"/>
        <end position="48"/>
    </location>
</feature>
<feature type="region of interest" description="G2 motif" evidence="2">
    <location>
        <begin position="173"/>
        <end position="181"/>
    </location>
</feature>
<feature type="region of interest" description="G3 motif" evidence="2">
    <location>
        <begin position="196"/>
        <end position="205"/>
    </location>
</feature>
<feature type="region of interest" description="G4 motif" evidence="2">
    <location>
        <begin position="265"/>
        <end position="272"/>
    </location>
</feature>
<feature type="region of interest" description="G5 motif" evidence="2">
    <location>
        <begin position="324"/>
        <end position="329"/>
    </location>
</feature>
<feature type="compositionally biased region" description="Basic and acidic residues" evidence="3">
    <location>
        <begin position="7"/>
        <end position="28"/>
    </location>
</feature>
<feature type="binding site" evidence="1">
    <location>
        <begin position="40"/>
        <end position="47"/>
    </location>
    <ligand>
        <name>GTP</name>
        <dbReference type="ChEBI" id="CHEBI:37565"/>
    </ligand>
</feature>
<feature type="binding site" evidence="1">
    <location>
        <position position="47"/>
    </location>
    <ligand>
        <name>Mg(2+)</name>
        <dbReference type="ChEBI" id="CHEBI:18420"/>
    </ligand>
</feature>
<feature type="binding site" evidence="1">
    <location>
        <begin position="175"/>
        <end position="181"/>
    </location>
    <ligand>
        <name>GTP</name>
        <dbReference type="ChEBI" id="CHEBI:37565"/>
    </ligand>
</feature>
<feature type="binding site" evidence="1">
    <location>
        <position position="181"/>
    </location>
    <ligand>
        <name>Mg(2+)</name>
        <dbReference type="ChEBI" id="CHEBI:18420"/>
    </ligand>
</feature>
<feature type="binding site" evidence="1">
    <location>
        <begin position="200"/>
        <end position="204"/>
    </location>
    <ligand>
        <name>GTP</name>
        <dbReference type="ChEBI" id="CHEBI:37565"/>
    </ligand>
</feature>
<feature type="binding site" evidence="1">
    <location>
        <begin position="269"/>
        <end position="272"/>
    </location>
    <ligand>
        <name>GTP</name>
        <dbReference type="ChEBI" id="CHEBI:37565"/>
    </ligand>
</feature>
<feature type="binding site" evidence="1">
    <location>
        <position position="326"/>
    </location>
    <ligand>
        <name>GTP</name>
        <dbReference type="ChEBI" id="CHEBI:37565"/>
    </ligand>
</feature>
<feature type="lipid moiety-binding region" description="N-myristoyl glycine" evidence="1">
    <location>
        <position position="2"/>
    </location>
</feature>
<comment type="function">
    <text>Guanine nucleotide-binding proteins (G proteins) are involved as modulators or transducers in various transmembrane signaling systems. Transducin is an amplifier and one of the transducers of a visual impulse that performs the coupling between rhodopsin and cGMP-phosphodiesterase.</text>
</comment>
<comment type="subunit">
    <text>G proteins are composed of 3 units; alpha, beta and gamma. The alpha chain contains the guanine nucleotide binding site.</text>
</comment>
<comment type="subcellular location">
    <subcellularLocation>
        <location evidence="4">Cell projection</location>
        <location evidence="4">Cilium</location>
        <location evidence="4">Photoreceptor outer segment</location>
    </subcellularLocation>
    <subcellularLocation>
        <location evidence="4">Photoreceptor inner segment</location>
    </subcellularLocation>
    <text evidence="4">Localizes mainly in the outer segment in the dark-adapted state, whereas is translocated to the inner part of the photoreceptors in the light-adapted state. During dark-adapted conditions, in the presence of UNC119 mislocalizes from the outer segment to the inner part of rod photoreceptors which leads to decreased photoreceptor damage caused by light.</text>
</comment>
<comment type="tissue specificity">
    <text evidence="4">In the retina, expressed in the rod photoreceptors.</text>
</comment>
<comment type="similarity">
    <text evidence="5">Belongs to the G-alpha family. G(i/o/t/z) subfamily.</text>
</comment>
<reference key="1">
    <citation type="journal article" date="1994" name="Endocrinology">
        <title>Expression of cone transducin, Gz alpha, and other G-protein alpha-subunit messenger ribonucleic acids in pancreatic islets.</title>
        <authorList>
            <person name="Zigman J.M."/>
            <person name="Westermark G.T."/>
            <person name="LaMendola J."/>
            <person name="Steiner D.F."/>
        </authorList>
    </citation>
    <scope>NUCLEOTIDE SEQUENCE [MRNA]</scope>
    <source>
        <strain>BALB/cJ</strain>
        <tissue>Retina</tissue>
    </source>
</reference>
<reference key="2">
    <citation type="journal article" date="2004" name="Genome Res.">
        <title>The status, quality, and expansion of the NIH full-length cDNA project: the Mammalian Gene Collection (MGC).</title>
        <authorList>
            <consortium name="The MGC Project Team"/>
        </authorList>
    </citation>
    <scope>NUCLEOTIDE SEQUENCE [LARGE SCALE MRNA]</scope>
    <source>
        <tissue>Eye</tissue>
    </source>
</reference>
<reference key="3">
    <citation type="journal article" date="2019" name="EMBO J.">
        <title>Cul3-Klhl18 ubiquitin ligase modulates rod transducin translocation during light-dark adaptation.</title>
        <authorList>
            <person name="Chaya T."/>
            <person name="Tsutsumi R."/>
            <person name="Varner L.R."/>
            <person name="Maeda Y."/>
            <person name="Yoshida S."/>
            <person name="Furukawa T."/>
        </authorList>
    </citation>
    <scope>SUBCELLULAR LOCATION</scope>
    <scope>TISSUE SPECIFICITY</scope>
</reference>
<organism>
    <name type="scientific">Mus musculus</name>
    <name type="common">Mouse</name>
    <dbReference type="NCBI Taxonomy" id="10090"/>
    <lineage>
        <taxon>Eukaryota</taxon>
        <taxon>Metazoa</taxon>
        <taxon>Chordata</taxon>
        <taxon>Craniata</taxon>
        <taxon>Vertebrata</taxon>
        <taxon>Euteleostomi</taxon>
        <taxon>Mammalia</taxon>
        <taxon>Eutheria</taxon>
        <taxon>Euarchontoglires</taxon>
        <taxon>Glires</taxon>
        <taxon>Rodentia</taxon>
        <taxon>Myomorpha</taxon>
        <taxon>Muroidea</taxon>
        <taxon>Muridae</taxon>
        <taxon>Murinae</taxon>
        <taxon>Mus</taxon>
        <taxon>Mus</taxon>
    </lineage>
</organism>
<sequence length="354" mass="40118">MGSGISAEDKELARRSKELEKKLQEDADKEAKTVKLLLLGAGESGKSTIVKQMKIIHQDGYSPEECLEFKSVIYGNVLQSILAIIRAMSTLGIDYAEPSCADAGRQLNNLADSTEEGTMPPELVDVIRKLWKDGGVQACFDRAAEFQLNDSASYYLNQLDRITDPNYLPNEQDVLRSRVKTTGIIETKFSVKDLNFRMFDVGGQRSERKKWIHCFEGVTCIIFCAALSAYDMVLVEDDEVNRMHESLHLFNSICNHKFFAATSIVLFLNKKDLFEEKIKKVHLSICFPEYDGNNSYEDAGNYIKSQFLDLNMRKDVKEIYSHMTCATDTQNVKFVFDAVTDIIIKENLKDCGLF</sequence>
<accession>P50149</accession>
<gene>
    <name type="primary">Gnat2</name>
</gene>
<name>GNAT2_MOUSE</name>
<proteinExistence type="evidence at transcript level"/>
<dbReference type="EMBL" id="L10666">
    <property type="protein sequence ID" value="AAC37650.1"/>
    <property type="molecule type" value="mRNA"/>
</dbReference>
<dbReference type="EMBL" id="BC016272">
    <property type="protein sequence ID" value="AAH16272.1"/>
    <property type="molecule type" value="mRNA"/>
</dbReference>
<dbReference type="CCDS" id="CCDS17750.1"/>
<dbReference type="RefSeq" id="NP_032167.1">
    <property type="nucleotide sequence ID" value="NM_008141.3"/>
</dbReference>
<dbReference type="RefSeq" id="XP_006501071.1">
    <property type="nucleotide sequence ID" value="XM_006501008.4"/>
</dbReference>
<dbReference type="RefSeq" id="XP_036018795.1">
    <property type="nucleotide sequence ID" value="XM_036162902.1"/>
</dbReference>
<dbReference type="SMR" id="P50149"/>
<dbReference type="BioGRID" id="199974">
    <property type="interactions" value="2"/>
</dbReference>
<dbReference type="FunCoup" id="P50149">
    <property type="interactions" value="97"/>
</dbReference>
<dbReference type="IntAct" id="P50149">
    <property type="interactions" value="2"/>
</dbReference>
<dbReference type="STRING" id="10090.ENSMUSP00000053818"/>
<dbReference type="iPTMnet" id="P50149"/>
<dbReference type="PhosphoSitePlus" id="P50149"/>
<dbReference type="jPOST" id="P50149"/>
<dbReference type="PaxDb" id="10090-ENSMUSP00000053818"/>
<dbReference type="ProteomicsDB" id="271005"/>
<dbReference type="Antibodypedia" id="33764">
    <property type="antibodies" value="173 antibodies from 26 providers"/>
</dbReference>
<dbReference type="DNASU" id="14686"/>
<dbReference type="Ensembl" id="ENSMUST00000058669.15">
    <property type="protein sequence ID" value="ENSMUSP00000053818.9"/>
    <property type="gene ID" value="ENSMUSG00000009108.16"/>
</dbReference>
<dbReference type="GeneID" id="14686"/>
<dbReference type="KEGG" id="mmu:14686"/>
<dbReference type="UCSC" id="uc008qyc.2">
    <property type="organism name" value="mouse"/>
</dbReference>
<dbReference type="AGR" id="MGI:95779"/>
<dbReference type="CTD" id="2780"/>
<dbReference type="MGI" id="MGI:95779">
    <property type="gene designation" value="Gnat2"/>
</dbReference>
<dbReference type="VEuPathDB" id="HostDB:ENSMUSG00000009108"/>
<dbReference type="eggNOG" id="KOG0082">
    <property type="taxonomic scope" value="Eukaryota"/>
</dbReference>
<dbReference type="GeneTree" id="ENSGT00940000158399"/>
<dbReference type="HOGENOM" id="CLU_014184_6_0_1"/>
<dbReference type="InParanoid" id="P50149"/>
<dbReference type="OMA" id="ICKPDYM"/>
<dbReference type="OrthoDB" id="5817230at2759"/>
<dbReference type="PhylomeDB" id="P50149"/>
<dbReference type="TreeFam" id="TF300673"/>
<dbReference type="Reactome" id="R-MMU-4086398">
    <property type="pathway name" value="Ca2+ pathway"/>
</dbReference>
<dbReference type="Reactome" id="R-MMU-418594">
    <property type="pathway name" value="G alpha (i) signalling events"/>
</dbReference>
<dbReference type="BioGRID-ORCS" id="14686">
    <property type="hits" value="3 hits in 76 CRISPR screens"/>
</dbReference>
<dbReference type="PRO" id="PR:P50149"/>
<dbReference type="Proteomes" id="UP000000589">
    <property type="component" value="Chromosome 3"/>
</dbReference>
<dbReference type="RNAct" id="P50149">
    <property type="molecule type" value="protein"/>
</dbReference>
<dbReference type="Bgee" id="ENSMUSG00000009108">
    <property type="expression patterns" value="Expressed in retinal neural layer and 98 other cell types or tissues"/>
</dbReference>
<dbReference type="ExpressionAtlas" id="P50149">
    <property type="expression patterns" value="baseline and differential"/>
</dbReference>
<dbReference type="GO" id="GO:0005834">
    <property type="term" value="C:heterotrimeric G-protein complex"/>
    <property type="evidence" value="ECO:0000304"/>
    <property type="project" value="MGI"/>
</dbReference>
<dbReference type="GO" id="GO:0016020">
    <property type="term" value="C:membrane"/>
    <property type="evidence" value="ECO:0000304"/>
    <property type="project" value="MGI"/>
</dbReference>
<dbReference type="GO" id="GO:0001917">
    <property type="term" value="C:photoreceptor inner segment"/>
    <property type="evidence" value="ECO:0007669"/>
    <property type="project" value="UniProtKB-SubCell"/>
</dbReference>
<dbReference type="GO" id="GO:0001750">
    <property type="term" value="C:photoreceptor outer segment"/>
    <property type="evidence" value="ECO:0007669"/>
    <property type="project" value="UniProtKB-SubCell"/>
</dbReference>
<dbReference type="GO" id="GO:0005886">
    <property type="term" value="C:plasma membrane"/>
    <property type="evidence" value="ECO:0000304"/>
    <property type="project" value="Reactome"/>
</dbReference>
<dbReference type="GO" id="GO:0045202">
    <property type="term" value="C:synapse"/>
    <property type="evidence" value="ECO:0000315"/>
    <property type="project" value="MGI"/>
</dbReference>
<dbReference type="GO" id="GO:0031683">
    <property type="term" value="F:G-protein beta/gamma-subunit complex binding"/>
    <property type="evidence" value="ECO:0007669"/>
    <property type="project" value="InterPro"/>
</dbReference>
<dbReference type="GO" id="GO:0005525">
    <property type="term" value="F:GTP binding"/>
    <property type="evidence" value="ECO:0007669"/>
    <property type="project" value="UniProtKB-KW"/>
</dbReference>
<dbReference type="GO" id="GO:0003924">
    <property type="term" value="F:GTPase activity"/>
    <property type="evidence" value="ECO:0000304"/>
    <property type="project" value="MGI"/>
</dbReference>
<dbReference type="GO" id="GO:0046872">
    <property type="term" value="F:metal ion binding"/>
    <property type="evidence" value="ECO:0007669"/>
    <property type="project" value="UniProtKB-KW"/>
</dbReference>
<dbReference type="GO" id="GO:0007188">
    <property type="term" value="P:adenylate cyclase-modulating G protein-coupled receptor signaling pathway"/>
    <property type="evidence" value="ECO:0007669"/>
    <property type="project" value="InterPro"/>
</dbReference>
<dbReference type="GO" id="GO:0120302">
    <property type="term" value="P:background adaptation"/>
    <property type="evidence" value="ECO:0000315"/>
    <property type="project" value="MGI"/>
</dbReference>
<dbReference type="GO" id="GO:0043010">
    <property type="term" value="P:camera-type eye development"/>
    <property type="evidence" value="ECO:0000315"/>
    <property type="project" value="MGI"/>
</dbReference>
<dbReference type="GO" id="GO:0000902">
    <property type="term" value="P:cell morphogenesis"/>
    <property type="evidence" value="ECO:0000315"/>
    <property type="project" value="MGI"/>
</dbReference>
<dbReference type="GO" id="GO:1904390">
    <property type="term" value="P:cone retinal bipolar cell differentiation"/>
    <property type="evidence" value="ECO:0000315"/>
    <property type="project" value="MGI"/>
</dbReference>
<dbReference type="GO" id="GO:0001580">
    <property type="term" value="P:detection of chemical stimulus involved in sensory perception of bitter taste"/>
    <property type="evidence" value="ECO:0007669"/>
    <property type="project" value="Ensembl"/>
</dbReference>
<dbReference type="GO" id="GO:0009583">
    <property type="term" value="P:detection of light stimulus"/>
    <property type="evidence" value="ECO:0000314"/>
    <property type="project" value="MGI"/>
</dbReference>
<dbReference type="GO" id="GO:0050908">
    <property type="term" value="P:detection of light stimulus involved in visual perception"/>
    <property type="evidence" value="ECO:0000315"/>
    <property type="project" value="MGI"/>
</dbReference>
<dbReference type="GO" id="GO:0042417">
    <property type="term" value="P:dopamine metabolic process"/>
    <property type="evidence" value="ECO:0000315"/>
    <property type="project" value="MGI"/>
</dbReference>
<dbReference type="GO" id="GO:0007199">
    <property type="term" value="P:G protein-coupled receptor signaling pathway coupled to cGMP nucleotide second messenger"/>
    <property type="evidence" value="ECO:0000304"/>
    <property type="project" value="MGI"/>
</dbReference>
<dbReference type="GO" id="GO:0010467">
    <property type="term" value="P:gene expression"/>
    <property type="evidence" value="ECO:0000315"/>
    <property type="project" value="MGI"/>
</dbReference>
<dbReference type="GO" id="GO:0048877">
    <property type="term" value="P:homeostasis of number of retina cells"/>
    <property type="evidence" value="ECO:0000315"/>
    <property type="project" value="MGI"/>
</dbReference>
<dbReference type="GO" id="GO:0051938">
    <property type="term" value="P:L-glutamate import"/>
    <property type="evidence" value="ECO:0000315"/>
    <property type="project" value="MGI"/>
</dbReference>
<dbReference type="GO" id="GO:0097719">
    <property type="term" value="P:neural tissue regeneration"/>
    <property type="evidence" value="ECO:0000316"/>
    <property type="project" value="MGI"/>
</dbReference>
<dbReference type="GO" id="GO:0007602">
    <property type="term" value="P:phototransduction"/>
    <property type="evidence" value="ECO:0000315"/>
    <property type="project" value="MGI"/>
</dbReference>
<dbReference type="GO" id="GO:0007204">
    <property type="term" value="P:positive regulation of cytosolic calcium ion concentration"/>
    <property type="evidence" value="ECO:0007669"/>
    <property type="project" value="Ensembl"/>
</dbReference>
<dbReference type="GO" id="GO:0008104">
    <property type="term" value="P:protein localization"/>
    <property type="evidence" value="ECO:0000315"/>
    <property type="project" value="MGI"/>
</dbReference>
<dbReference type="GO" id="GO:0150103">
    <property type="term" value="P:reactive gliosis"/>
    <property type="evidence" value="ECO:0000315"/>
    <property type="project" value="MGI"/>
</dbReference>
<dbReference type="GO" id="GO:0009642">
    <property type="term" value="P:response to light intensity"/>
    <property type="evidence" value="ECO:0000315"/>
    <property type="project" value="MGI"/>
</dbReference>
<dbReference type="GO" id="GO:0009416">
    <property type="term" value="P:response to light stimulus"/>
    <property type="evidence" value="ECO:0000314"/>
    <property type="project" value="MGI"/>
</dbReference>
<dbReference type="GO" id="GO:0009411">
    <property type="term" value="P:response to UV"/>
    <property type="evidence" value="ECO:0000315"/>
    <property type="project" value="MGI"/>
</dbReference>
<dbReference type="GO" id="GO:0046549">
    <property type="term" value="P:retinal cone cell development"/>
    <property type="evidence" value="ECO:0000315"/>
    <property type="project" value="MGI"/>
</dbReference>
<dbReference type="GO" id="GO:0042670">
    <property type="term" value="P:retinal cone cell differentiation"/>
    <property type="evidence" value="ECO:0000314"/>
    <property type="project" value="MGI"/>
</dbReference>
<dbReference type="GO" id="GO:0060221">
    <property type="term" value="P:retinal rod cell differentiation"/>
    <property type="evidence" value="ECO:0000314"/>
    <property type="project" value="MGI"/>
</dbReference>
<dbReference type="GO" id="GO:0048771">
    <property type="term" value="P:tissue remodeling"/>
    <property type="evidence" value="ECO:0000315"/>
    <property type="project" value="MGI"/>
</dbReference>
<dbReference type="GO" id="GO:0007632">
    <property type="term" value="P:visual behavior"/>
    <property type="evidence" value="ECO:0000315"/>
    <property type="project" value="MGI"/>
</dbReference>
<dbReference type="GO" id="GO:0007601">
    <property type="term" value="P:visual perception"/>
    <property type="evidence" value="ECO:0000315"/>
    <property type="project" value="MGI"/>
</dbReference>
<dbReference type="CDD" id="cd00066">
    <property type="entry name" value="G-alpha"/>
    <property type="match status" value="1"/>
</dbReference>
<dbReference type="FunFam" id="1.10.400.10:FF:000001">
    <property type="entry name" value="Guanine nucleotide-binding protein G(I) subunit alpha"/>
    <property type="match status" value="1"/>
</dbReference>
<dbReference type="FunFam" id="3.40.50.300:FF:000720">
    <property type="entry name" value="Guanine nucleotide-binding protein G(k) subunit alpha"/>
    <property type="match status" value="1"/>
</dbReference>
<dbReference type="FunFam" id="3.40.50.300:FF:000256">
    <property type="entry name" value="Guanine nucleotide-binding protein G(t) subunit alpha"/>
    <property type="match status" value="1"/>
</dbReference>
<dbReference type="Gene3D" id="1.10.400.10">
    <property type="entry name" value="GI Alpha 1, domain 2-like"/>
    <property type="match status" value="1"/>
</dbReference>
<dbReference type="Gene3D" id="3.40.50.300">
    <property type="entry name" value="P-loop containing nucleotide triphosphate hydrolases"/>
    <property type="match status" value="1"/>
</dbReference>
<dbReference type="InterPro" id="IPR001408">
    <property type="entry name" value="Gprotein_alpha_I"/>
</dbReference>
<dbReference type="InterPro" id="IPR001019">
    <property type="entry name" value="Gprotein_alpha_su"/>
</dbReference>
<dbReference type="InterPro" id="IPR011025">
    <property type="entry name" value="GproteinA_insert"/>
</dbReference>
<dbReference type="InterPro" id="IPR027417">
    <property type="entry name" value="P-loop_NTPase"/>
</dbReference>
<dbReference type="PANTHER" id="PTHR10218">
    <property type="entry name" value="GTP-BINDING PROTEIN ALPHA SUBUNIT"/>
    <property type="match status" value="1"/>
</dbReference>
<dbReference type="PANTHER" id="PTHR10218:SF68">
    <property type="entry name" value="GUANINE NUCLEOTIDE-BINDING PROTEIN G(T) SUBUNIT ALPHA-2"/>
    <property type="match status" value="1"/>
</dbReference>
<dbReference type="Pfam" id="PF00503">
    <property type="entry name" value="G-alpha"/>
    <property type="match status" value="1"/>
</dbReference>
<dbReference type="PRINTS" id="PR00318">
    <property type="entry name" value="GPROTEINA"/>
</dbReference>
<dbReference type="PRINTS" id="PR00441">
    <property type="entry name" value="GPROTEINAI"/>
</dbReference>
<dbReference type="SMART" id="SM00275">
    <property type="entry name" value="G_alpha"/>
    <property type="match status" value="1"/>
</dbReference>
<dbReference type="SUPFAM" id="SSF52540">
    <property type="entry name" value="P-loop containing nucleoside triphosphate hydrolases"/>
    <property type="match status" value="1"/>
</dbReference>
<dbReference type="SUPFAM" id="SSF47895">
    <property type="entry name" value="Transducin (alpha subunit), insertion domain"/>
    <property type="match status" value="1"/>
</dbReference>
<dbReference type="PROSITE" id="PS51882">
    <property type="entry name" value="G_ALPHA"/>
    <property type="match status" value="1"/>
</dbReference>
<protein>
    <recommendedName>
        <fullName>Guanine nucleotide-binding protein G(t) subunit alpha-2</fullName>
    </recommendedName>
    <alternativeName>
        <fullName>Transducin alpha-2 chain</fullName>
    </alternativeName>
</protein>
<evidence type="ECO:0000250" key="1"/>
<evidence type="ECO:0000255" key="2">
    <source>
        <dbReference type="PROSITE-ProRule" id="PRU01230"/>
    </source>
</evidence>
<evidence type="ECO:0000256" key="3">
    <source>
        <dbReference type="SAM" id="MobiDB-lite"/>
    </source>
</evidence>
<evidence type="ECO:0000269" key="4">
    <source>
    </source>
</evidence>
<evidence type="ECO:0000305" key="5"/>
<keyword id="KW-0966">Cell projection</keyword>
<keyword id="KW-0342">GTP-binding</keyword>
<keyword id="KW-0449">Lipoprotein</keyword>
<keyword id="KW-0460">Magnesium</keyword>
<keyword id="KW-0479">Metal-binding</keyword>
<keyword id="KW-0519">Myristate</keyword>
<keyword id="KW-0547">Nucleotide-binding</keyword>
<keyword id="KW-1185">Reference proteome</keyword>
<keyword id="KW-0716">Sensory transduction</keyword>
<keyword id="KW-0807">Transducer</keyword>
<keyword id="KW-0844">Vision</keyword>